<gene>
    <name evidence="1" type="primary">atpG</name>
    <name evidence="1" type="synonym">atpC</name>
    <name type="ordered locus">Cyan7425_1493</name>
</gene>
<dbReference type="EMBL" id="CP001344">
    <property type="protein sequence ID" value="ACL43863.1"/>
    <property type="molecule type" value="Genomic_DNA"/>
</dbReference>
<dbReference type="SMR" id="B8HPK2"/>
<dbReference type="STRING" id="395961.Cyan7425_1493"/>
<dbReference type="KEGG" id="cyn:Cyan7425_1493"/>
<dbReference type="eggNOG" id="COG0224">
    <property type="taxonomic scope" value="Bacteria"/>
</dbReference>
<dbReference type="HOGENOM" id="CLU_050669_0_0_3"/>
<dbReference type="OrthoDB" id="9812769at2"/>
<dbReference type="GO" id="GO:0031676">
    <property type="term" value="C:plasma membrane-derived thylakoid membrane"/>
    <property type="evidence" value="ECO:0007669"/>
    <property type="project" value="UniProtKB-SubCell"/>
</dbReference>
<dbReference type="GO" id="GO:0045259">
    <property type="term" value="C:proton-transporting ATP synthase complex"/>
    <property type="evidence" value="ECO:0007669"/>
    <property type="project" value="UniProtKB-KW"/>
</dbReference>
<dbReference type="GO" id="GO:0005524">
    <property type="term" value="F:ATP binding"/>
    <property type="evidence" value="ECO:0007669"/>
    <property type="project" value="UniProtKB-UniRule"/>
</dbReference>
<dbReference type="GO" id="GO:0046933">
    <property type="term" value="F:proton-transporting ATP synthase activity, rotational mechanism"/>
    <property type="evidence" value="ECO:0007669"/>
    <property type="project" value="UniProtKB-UniRule"/>
</dbReference>
<dbReference type="CDD" id="cd12151">
    <property type="entry name" value="F1-ATPase_gamma"/>
    <property type="match status" value="1"/>
</dbReference>
<dbReference type="FunFam" id="3.40.1380.10:FF:000006">
    <property type="entry name" value="ATP synthase gamma chain"/>
    <property type="match status" value="1"/>
</dbReference>
<dbReference type="FunFam" id="1.10.287.80:FF:000003">
    <property type="entry name" value="ATP synthase gamma chain, chloroplastic"/>
    <property type="match status" value="1"/>
</dbReference>
<dbReference type="FunFam" id="1.10.287.80:FF:000004">
    <property type="entry name" value="ATP synthase gamma chain, chloroplastic"/>
    <property type="match status" value="1"/>
</dbReference>
<dbReference type="Gene3D" id="3.40.1380.10">
    <property type="match status" value="1"/>
</dbReference>
<dbReference type="Gene3D" id="1.10.287.80">
    <property type="entry name" value="ATP synthase, gamma subunit, helix hairpin domain"/>
    <property type="match status" value="2"/>
</dbReference>
<dbReference type="HAMAP" id="MF_00815">
    <property type="entry name" value="ATP_synth_gamma_bact"/>
    <property type="match status" value="1"/>
</dbReference>
<dbReference type="InterPro" id="IPR035968">
    <property type="entry name" value="ATP_synth_F1_ATPase_gsu"/>
</dbReference>
<dbReference type="InterPro" id="IPR000131">
    <property type="entry name" value="ATP_synth_F1_gsu"/>
</dbReference>
<dbReference type="InterPro" id="IPR023632">
    <property type="entry name" value="ATP_synth_F1_gsu_CS"/>
</dbReference>
<dbReference type="NCBIfam" id="TIGR01146">
    <property type="entry name" value="ATPsyn_F1gamma"/>
    <property type="match status" value="1"/>
</dbReference>
<dbReference type="NCBIfam" id="NF004145">
    <property type="entry name" value="PRK05621.1-2"/>
    <property type="match status" value="1"/>
</dbReference>
<dbReference type="PANTHER" id="PTHR11693">
    <property type="entry name" value="ATP SYNTHASE GAMMA CHAIN"/>
    <property type="match status" value="1"/>
</dbReference>
<dbReference type="PANTHER" id="PTHR11693:SF41">
    <property type="entry name" value="ATP SYNTHASE GAMMA CHAIN, CHLOROPLASTIC"/>
    <property type="match status" value="1"/>
</dbReference>
<dbReference type="Pfam" id="PF00231">
    <property type="entry name" value="ATP-synt"/>
    <property type="match status" value="1"/>
</dbReference>
<dbReference type="PRINTS" id="PR00126">
    <property type="entry name" value="ATPASEGAMMA"/>
</dbReference>
<dbReference type="SUPFAM" id="SSF52943">
    <property type="entry name" value="ATP synthase (F1-ATPase), gamma subunit"/>
    <property type="match status" value="1"/>
</dbReference>
<dbReference type="PROSITE" id="PS00153">
    <property type="entry name" value="ATPASE_GAMMA"/>
    <property type="match status" value="1"/>
</dbReference>
<evidence type="ECO:0000255" key="1">
    <source>
        <dbReference type="HAMAP-Rule" id="MF_00815"/>
    </source>
</evidence>
<proteinExistence type="inferred from homology"/>
<sequence>MANLKSIRDRIQSVKNTQKITEAMRLVAAAKVRRAQEQVIATRPFADRLAQVLYGLQARLRFEEANLPLLRRREVKKVALLVVSGDRGLCGAYNTNVIKRAAERSKELKAEGIDYTFVLVGRKAIQYFQRREQPIDATYTGLEQVPTAAEASQIADELLSLFLSESVDRVELVYTKFVSLISSRPVVQTLLPLDPQGLEAQDDEIFRLTTRGGRFEVQREKVSSATQSMPQDMIFEQDPLQILDALLPLYLNNQLLRALQESAASELAARMTAMNNASDNAKELIKGLSMTYNKARQAAITQEILEVVGGAEALK</sequence>
<protein>
    <recommendedName>
        <fullName evidence="1">ATP synthase gamma chain</fullName>
    </recommendedName>
    <alternativeName>
        <fullName evidence="1">ATP synthase F1 sector gamma subunit</fullName>
    </alternativeName>
    <alternativeName>
        <fullName evidence="1">F-ATPase gamma subunit</fullName>
    </alternativeName>
</protein>
<organism>
    <name type="scientific">Cyanothece sp. (strain PCC 7425 / ATCC 29141)</name>
    <dbReference type="NCBI Taxonomy" id="395961"/>
    <lineage>
        <taxon>Bacteria</taxon>
        <taxon>Bacillati</taxon>
        <taxon>Cyanobacteriota</taxon>
        <taxon>Cyanophyceae</taxon>
        <taxon>Gomontiellales</taxon>
        <taxon>Cyanothecaceae</taxon>
        <taxon>Cyanothece</taxon>
    </lineage>
</organism>
<name>ATPG_CYAP4</name>
<accession>B8HPK2</accession>
<keyword id="KW-0066">ATP synthesis</keyword>
<keyword id="KW-0139">CF(1)</keyword>
<keyword id="KW-0375">Hydrogen ion transport</keyword>
<keyword id="KW-0406">Ion transport</keyword>
<keyword id="KW-0472">Membrane</keyword>
<keyword id="KW-0793">Thylakoid</keyword>
<keyword id="KW-0813">Transport</keyword>
<reference key="1">
    <citation type="journal article" date="2011" name="MBio">
        <title>Novel metabolic attributes of the genus Cyanothece, comprising a group of unicellular nitrogen-fixing Cyanobacteria.</title>
        <authorList>
            <person name="Bandyopadhyay A."/>
            <person name="Elvitigala T."/>
            <person name="Welsh E."/>
            <person name="Stockel J."/>
            <person name="Liberton M."/>
            <person name="Min H."/>
            <person name="Sherman L.A."/>
            <person name="Pakrasi H.B."/>
        </authorList>
    </citation>
    <scope>NUCLEOTIDE SEQUENCE [LARGE SCALE GENOMIC DNA]</scope>
    <source>
        <strain>PCC 7425 / ATCC 29141</strain>
    </source>
</reference>
<feature type="chain" id="PRO_1000148614" description="ATP synthase gamma chain">
    <location>
        <begin position="1"/>
        <end position="315"/>
    </location>
</feature>
<comment type="function">
    <text evidence="1">Produces ATP from ADP in the presence of a proton gradient across the membrane. The gamma chain is believed to be important in regulating ATPase activity and the flow of protons through the CF(0) complex.</text>
</comment>
<comment type="subunit">
    <text evidence="1">F-type ATPases have 2 components, CF(1) - the catalytic core - and CF(0) - the membrane proton channel. CF(1) has five subunits: alpha(3), beta(3), gamma(1), delta(1), epsilon(1). CF(0) has three main subunits: a, b and c.</text>
</comment>
<comment type="subcellular location">
    <subcellularLocation>
        <location evidence="1">Cellular thylakoid membrane</location>
        <topology evidence="1">Peripheral membrane protein</topology>
    </subcellularLocation>
</comment>
<comment type="similarity">
    <text evidence="1">Belongs to the ATPase gamma chain family.</text>
</comment>